<sequence length="380" mass="41998">MADPKFQNLPGIAYDQPDVYETPDDPELDTSDYYEEEPENEAIERLHISPSVAHKRFSGATVEGSVDFTDRIGRRMCRGYDTRGSSDYELVGQGEKETPVQKCQRLQIEMNELLNEVAALQVDRKVADEEKQSYDAVATVISTARKVLESLKLEQVLGKEQTPGSKQVKALISQVEEFKQSGVLTAIPTPGTDLAATARVASLEQRISQLEKVLGAQPDKLSRLTAATNTTNVLEAVRHLSTKAALIQPDKLDTIEQRLTSLAGKMDAIAEKSSGSAQDAKRDQKITELYDIAKRTEPVVEILPHVIERMQALEALHKYANNFAKIIAEIEQKQGTITTSLVNNKELLHSVQETFAQNLETINSKVAKVEQRVAAISSAK</sequence>
<proteinExistence type="evidence at protein level"/>
<gene>
    <name evidence="6" type="primary">DCTN2-p50</name>
    <name evidence="6" type="synonym">Dmn</name>
    <name evidence="6" type="ORF">CG8269</name>
</gene>
<organism>
    <name type="scientific">Drosophila melanogaster</name>
    <name type="common">Fruit fly</name>
    <dbReference type="NCBI Taxonomy" id="7227"/>
    <lineage>
        <taxon>Eukaryota</taxon>
        <taxon>Metazoa</taxon>
        <taxon>Ecdysozoa</taxon>
        <taxon>Arthropoda</taxon>
        <taxon>Hexapoda</taxon>
        <taxon>Insecta</taxon>
        <taxon>Pterygota</taxon>
        <taxon>Neoptera</taxon>
        <taxon>Endopterygota</taxon>
        <taxon>Diptera</taxon>
        <taxon>Brachycera</taxon>
        <taxon>Muscomorpha</taxon>
        <taxon>Ephydroidea</taxon>
        <taxon>Drosophilidae</taxon>
        <taxon>Drosophila</taxon>
        <taxon>Sophophora</taxon>
    </lineage>
</organism>
<comment type="function">
    <text evidence="1">Modulates cytoplasmic dynein binding to an organelle, and plays a role in prometaphase chromosome alignment and spindle organization during mitosis. May play a role in synapse formation during brain development (By similarity).</text>
</comment>
<comment type="subunit">
    <text evidence="1">Subunit of dynactin, a multiprotein complex associated with dynein.</text>
</comment>
<comment type="subcellular location">
    <subcellularLocation>
        <location evidence="1">Cytoplasm</location>
        <location evidence="1">Cytoskeleton</location>
    </subcellularLocation>
    <subcellularLocation>
        <location evidence="1">Membrane</location>
        <topology evidence="1">Peripheral membrane protein</topology>
    </subcellularLocation>
</comment>
<comment type="similarity">
    <text evidence="5">Belongs to the dynactin subunit 2 family.</text>
</comment>
<reference key="1">
    <citation type="journal article" date="2000" name="Science">
        <title>The genome sequence of Drosophila melanogaster.</title>
        <authorList>
            <person name="Adams M.D."/>
            <person name="Celniker S.E."/>
            <person name="Holt R.A."/>
            <person name="Evans C.A."/>
            <person name="Gocayne J.D."/>
            <person name="Amanatides P.G."/>
            <person name="Scherer S.E."/>
            <person name="Li P.W."/>
            <person name="Hoskins R.A."/>
            <person name="Galle R.F."/>
            <person name="George R.A."/>
            <person name="Lewis S.E."/>
            <person name="Richards S."/>
            <person name="Ashburner M."/>
            <person name="Henderson S.N."/>
            <person name="Sutton G.G."/>
            <person name="Wortman J.R."/>
            <person name="Yandell M.D."/>
            <person name="Zhang Q."/>
            <person name="Chen L.X."/>
            <person name="Brandon R.C."/>
            <person name="Rogers Y.-H.C."/>
            <person name="Blazej R.G."/>
            <person name="Champe M."/>
            <person name="Pfeiffer B.D."/>
            <person name="Wan K.H."/>
            <person name="Doyle C."/>
            <person name="Baxter E.G."/>
            <person name="Helt G."/>
            <person name="Nelson C.R."/>
            <person name="Miklos G.L.G."/>
            <person name="Abril J.F."/>
            <person name="Agbayani A."/>
            <person name="An H.-J."/>
            <person name="Andrews-Pfannkoch C."/>
            <person name="Baldwin D."/>
            <person name="Ballew R.M."/>
            <person name="Basu A."/>
            <person name="Baxendale J."/>
            <person name="Bayraktaroglu L."/>
            <person name="Beasley E.M."/>
            <person name="Beeson K.Y."/>
            <person name="Benos P.V."/>
            <person name="Berman B.P."/>
            <person name="Bhandari D."/>
            <person name="Bolshakov S."/>
            <person name="Borkova D."/>
            <person name="Botchan M.R."/>
            <person name="Bouck J."/>
            <person name="Brokstein P."/>
            <person name="Brottier P."/>
            <person name="Burtis K.C."/>
            <person name="Busam D.A."/>
            <person name="Butler H."/>
            <person name="Cadieu E."/>
            <person name="Center A."/>
            <person name="Chandra I."/>
            <person name="Cherry J.M."/>
            <person name="Cawley S."/>
            <person name="Dahlke C."/>
            <person name="Davenport L.B."/>
            <person name="Davies P."/>
            <person name="de Pablos B."/>
            <person name="Delcher A."/>
            <person name="Deng Z."/>
            <person name="Mays A.D."/>
            <person name="Dew I."/>
            <person name="Dietz S.M."/>
            <person name="Dodson K."/>
            <person name="Doup L.E."/>
            <person name="Downes M."/>
            <person name="Dugan-Rocha S."/>
            <person name="Dunkov B.C."/>
            <person name="Dunn P."/>
            <person name="Durbin K.J."/>
            <person name="Evangelista C.C."/>
            <person name="Ferraz C."/>
            <person name="Ferriera S."/>
            <person name="Fleischmann W."/>
            <person name="Fosler C."/>
            <person name="Gabrielian A.E."/>
            <person name="Garg N.S."/>
            <person name="Gelbart W.M."/>
            <person name="Glasser K."/>
            <person name="Glodek A."/>
            <person name="Gong F."/>
            <person name="Gorrell J.H."/>
            <person name="Gu Z."/>
            <person name="Guan P."/>
            <person name="Harris M."/>
            <person name="Harris N.L."/>
            <person name="Harvey D.A."/>
            <person name="Heiman T.J."/>
            <person name="Hernandez J.R."/>
            <person name="Houck J."/>
            <person name="Hostin D."/>
            <person name="Houston K.A."/>
            <person name="Howland T.J."/>
            <person name="Wei M.-H."/>
            <person name="Ibegwam C."/>
            <person name="Jalali M."/>
            <person name="Kalush F."/>
            <person name="Karpen G.H."/>
            <person name="Ke Z."/>
            <person name="Kennison J.A."/>
            <person name="Ketchum K.A."/>
            <person name="Kimmel B.E."/>
            <person name="Kodira C.D."/>
            <person name="Kraft C.L."/>
            <person name="Kravitz S."/>
            <person name="Kulp D."/>
            <person name="Lai Z."/>
            <person name="Lasko P."/>
            <person name="Lei Y."/>
            <person name="Levitsky A.A."/>
            <person name="Li J.H."/>
            <person name="Li Z."/>
            <person name="Liang Y."/>
            <person name="Lin X."/>
            <person name="Liu X."/>
            <person name="Mattei B."/>
            <person name="McIntosh T.C."/>
            <person name="McLeod M.P."/>
            <person name="McPherson D."/>
            <person name="Merkulov G."/>
            <person name="Milshina N.V."/>
            <person name="Mobarry C."/>
            <person name="Morris J."/>
            <person name="Moshrefi A."/>
            <person name="Mount S.M."/>
            <person name="Moy M."/>
            <person name="Murphy B."/>
            <person name="Murphy L."/>
            <person name="Muzny D.M."/>
            <person name="Nelson D.L."/>
            <person name="Nelson D.R."/>
            <person name="Nelson K.A."/>
            <person name="Nixon K."/>
            <person name="Nusskern D.R."/>
            <person name="Pacleb J.M."/>
            <person name="Palazzolo M."/>
            <person name="Pittman G.S."/>
            <person name="Pan S."/>
            <person name="Pollard J."/>
            <person name="Puri V."/>
            <person name="Reese M.G."/>
            <person name="Reinert K."/>
            <person name="Remington K."/>
            <person name="Saunders R.D.C."/>
            <person name="Scheeler F."/>
            <person name="Shen H."/>
            <person name="Shue B.C."/>
            <person name="Siden-Kiamos I."/>
            <person name="Simpson M."/>
            <person name="Skupski M.P."/>
            <person name="Smith T.J."/>
            <person name="Spier E."/>
            <person name="Spradling A.C."/>
            <person name="Stapleton M."/>
            <person name="Strong R."/>
            <person name="Sun E."/>
            <person name="Svirskas R."/>
            <person name="Tector C."/>
            <person name="Turner R."/>
            <person name="Venter E."/>
            <person name="Wang A.H."/>
            <person name="Wang X."/>
            <person name="Wang Z.-Y."/>
            <person name="Wassarman D.A."/>
            <person name="Weinstock G.M."/>
            <person name="Weissenbach J."/>
            <person name="Williams S.M."/>
            <person name="Woodage T."/>
            <person name="Worley K.C."/>
            <person name="Wu D."/>
            <person name="Yang S."/>
            <person name="Yao Q.A."/>
            <person name="Ye J."/>
            <person name="Yeh R.-F."/>
            <person name="Zaveri J.S."/>
            <person name="Zhan M."/>
            <person name="Zhang G."/>
            <person name="Zhao Q."/>
            <person name="Zheng L."/>
            <person name="Zheng X.H."/>
            <person name="Zhong F.N."/>
            <person name="Zhong W."/>
            <person name="Zhou X."/>
            <person name="Zhu S.C."/>
            <person name="Zhu X."/>
            <person name="Smith H.O."/>
            <person name="Gibbs R.A."/>
            <person name="Myers E.W."/>
            <person name="Rubin G.M."/>
            <person name="Venter J.C."/>
        </authorList>
    </citation>
    <scope>NUCLEOTIDE SEQUENCE [LARGE SCALE GENOMIC DNA]</scope>
    <source>
        <strain>Berkeley</strain>
    </source>
</reference>
<reference key="2">
    <citation type="journal article" date="2002" name="Genome Biol.">
        <title>Annotation of the Drosophila melanogaster euchromatic genome: a systematic review.</title>
        <authorList>
            <person name="Misra S."/>
            <person name="Crosby M.A."/>
            <person name="Mungall C.J."/>
            <person name="Matthews B.B."/>
            <person name="Campbell K.S."/>
            <person name="Hradecky P."/>
            <person name="Huang Y."/>
            <person name="Kaminker J.S."/>
            <person name="Millburn G.H."/>
            <person name="Prochnik S.E."/>
            <person name="Smith C.D."/>
            <person name="Tupy J.L."/>
            <person name="Whitfield E.J."/>
            <person name="Bayraktaroglu L."/>
            <person name="Berman B.P."/>
            <person name="Bettencourt B.R."/>
            <person name="Celniker S.E."/>
            <person name="de Grey A.D.N.J."/>
            <person name="Drysdale R.A."/>
            <person name="Harris N.L."/>
            <person name="Richter J."/>
            <person name="Russo S."/>
            <person name="Schroeder A.J."/>
            <person name="Shu S.Q."/>
            <person name="Stapleton M."/>
            <person name="Yamada C."/>
            <person name="Ashburner M."/>
            <person name="Gelbart W.M."/>
            <person name="Rubin G.M."/>
            <person name="Lewis S.E."/>
        </authorList>
    </citation>
    <scope>GENOME REANNOTATION</scope>
    <source>
        <strain>Berkeley</strain>
    </source>
</reference>
<reference key="3">
    <citation type="journal article" date="2002" name="Genome Biol.">
        <title>A Drosophila full-length cDNA resource.</title>
        <authorList>
            <person name="Stapleton M."/>
            <person name="Carlson J.W."/>
            <person name="Brokstein P."/>
            <person name="Yu C."/>
            <person name="Champe M."/>
            <person name="George R.A."/>
            <person name="Guarin H."/>
            <person name="Kronmiller B."/>
            <person name="Pacleb J.M."/>
            <person name="Park S."/>
            <person name="Wan K.H."/>
            <person name="Rubin G.M."/>
            <person name="Celniker S.E."/>
        </authorList>
    </citation>
    <scope>NUCLEOTIDE SEQUENCE [LARGE SCALE MRNA]</scope>
    <source>
        <strain>Berkeley</strain>
        <tissue>Embryo</tissue>
    </source>
</reference>
<reference key="4">
    <citation type="journal article" date="2008" name="J. Proteome Res.">
        <title>Phosphoproteome analysis of Drosophila melanogaster embryos.</title>
        <authorList>
            <person name="Zhai B."/>
            <person name="Villen J."/>
            <person name="Beausoleil S.A."/>
            <person name="Mintseris J."/>
            <person name="Gygi S.P."/>
        </authorList>
    </citation>
    <scope>PHOSPHORYLATION [LARGE SCALE ANALYSIS] AT SER-49; SER-58 AND SER-86</scope>
    <scope>IDENTIFICATION BY MASS SPECTROMETRY</scope>
    <source>
        <tissue>Embryo</tissue>
    </source>
</reference>
<evidence type="ECO:0000250" key="1"/>
<evidence type="ECO:0000255" key="2"/>
<evidence type="ECO:0000256" key="3">
    <source>
        <dbReference type="SAM" id="MobiDB-lite"/>
    </source>
</evidence>
<evidence type="ECO:0000269" key="4">
    <source>
    </source>
</evidence>
<evidence type="ECO:0000305" key="5"/>
<evidence type="ECO:0000312" key="6">
    <source>
        <dbReference type="FlyBase" id="FBgn0021825"/>
    </source>
</evidence>
<dbReference type="EMBL" id="AE013599">
    <property type="protein sequence ID" value="AAF59034.1"/>
    <property type="molecule type" value="Genomic_DNA"/>
</dbReference>
<dbReference type="EMBL" id="AY061092">
    <property type="protein sequence ID" value="AAL28640.1"/>
    <property type="molecule type" value="mRNA"/>
</dbReference>
<dbReference type="RefSeq" id="NP_524690.1">
    <property type="nucleotide sequence ID" value="NM_079951.3"/>
</dbReference>
<dbReference type="SMR" id="Q7K2D2"/>
<dbReference type="BioGRID" id="68822">
    <property type="interactions" value="34"/>
</dbReference>
<dbReference type="ComplexPortal" id="CPX-2434">
    <property type="entry name" value="Dynactin complex"/>
</dbReference>
<dbReference type="FunCoup" id="Q7K2D2">
    <property type="interactions" value="1426"/>
</dbReference>
<dbReference type="IntAct" id="Q7K2D2">
    <property type="interactions" value="11"/>
</dbReference>
<dbReference type="STRING" id="7227.FBpp0087722"/>
<dbReference type="iPTMnet" id="Q7K2D2"/>
<dbReference type="PaxDb" id="7227-FBpp0087722"/>
<dbReference type="DNASU" id="44086"/>
<dbReference type="EnsemblMetazoa" id="FBtr0088641">
    <property type="protein sequence ID" value="FBpp0087722"/>
    <property type="gene ID" value="FBgn0021825"/>
</dbReference>
<dbReference type="GeneID" id="44086"/>
<dbReference type="KEGG" id="dme:Dmel_CG8269"/>
<dbReference type="AGR" id="FB:FBgn0021825"/>
<dbReference type="CTD" id="44086"/>
<dbReference type="FlyBase" id="FBgn0021825">
    <property type="gene designation" value="DCTN2-p50"/>
</dbReference>
<dbReference type="VEuPathDB" id="VectorBase:FBgn0021825"/>
<dbReference type="eggNOG" id="KOG3958">
    <property type="taxonomic scope" value="Eukaryota"/>
</dbReference>
<dbReference type="GeneTree" id="ENSGT00390000003427"/>
<dbReference type="HOGENOM" id="CLU_049964_1_0_1"/>
<dbReference type="InParanoid" id="Q7K2D2"/>
<dbReference type="OMA" id="YKFGDWE"/>
<dbReference type="OrthoDB" id="4977at2759"/>
<dbReference type="PhylomeDB" id="Q7K2D2"/>
<dbReference type="Reactome" id="R-DME-3371497">
    <property type="pathway name" value="HSP90 chaperone cycle for steroid hormone receptors (SHR) in the presence of ligand"/>
</dbReference>
<dbReference type="Reactome" id="R-DME-6807878">
    <property type="pathway name" value="COPI-mediated anterograde transport"/>
</dbReference>
<dbReference type="Reactome" id="R-DME-6811436">
    <property type="pathway name" value="COPI-independent Golgi-to-ER retrograde traffic"/>
</dbReference>
<dbReference type="BioGRID-ORCS" id="44086">
    <property type="hits" value="0 hits in 1 CRISPR screen"/>
</dbReference>
<dbReference type="GenomeRNAi" id="44086"/>
<dbReference type="PRO" id="PR:Q7K2D2"/>
<dbReference type="Proteomes" id="UP000000803">
    <property type="component" value="Chromosome 2R"/>
</dbReference>
<dbReference type="Bgee" id="FBgn0021825">
    <property type="expression patterns" value="Expressed in oviduct (Drosophila) and 129 other cell types or tissues"/>
</dbReference>
<dbReference type="GO" id="GO:1904115">
    <property type="term" value="C:axon cytoplasm"/>
    <property type="evidence" value="ECO:0007669"/>
    <property type="project" value="GOC"/>
</dbReference>
<dbReference type="GO" id="GO:0005938">
    <property type="term" value="C:cell cortex"/>
    <property type="evidence" value="ECO:0000314"/>
    <property type="project" value="FlyBase"/>
</dbReference>
<dbReference type="GO" id="GO:0005813">
    <property type="term" value="C:centrosome"/>
    <property type="evidence" value="ECO:0000318"/>
    <property type="project" value="GO_Central"/>
</dbReference>
<dbReference type="GO" id="GO:0005737">
    <property type="term" value="C:cytoplasm"/>
    <property type="evidence" value="ECO:0000318"/>
    <property type="project" value="GO_Central"/>
</dbReference>
<dbReference type="GO" id="GO:0005869">
    <property type="term" value="C:dynactin complex"/>
    <property type="evidence" value="ECO:0000250"/>
    <property type="project" value="UniProtKB"/>
</dbReference>
<dbReference type="GO" id="GO:0030286">
    <property type="term" value="C:dynein complex"/>
    <property type="evidence" value="ECO:0007669"/>
    <property type="project" value="UniProtKB-KW"/>
</dbReference>
<dbReference type="GO" id="GO:0016020">
    <property type="term" value="C:membrane"/>
    <property type="evidence" value="ECO:0007669"/>
    <property type="project" value="UniProtKB-SubCell"/>
</dbReference>
<dbReference type="GO" id="GO:0005874">
    <property type="term" value="C:microtubule"/>
    <property type="evidence" value="ECO:0007669"/>
    <property type="project" value="UniProtKB-KW"/>
</dbReference>
<dbReference type="GO" id="GO:0031982">
    <property type="term" value="C:vesicle"/>
    <property type="evidence" value="ECO:0000250"/>
    <property type="project" value="UniProtKB"/>
</dbReference>
<dbReference type="GO" id="GO:0051642">
    <property type="term" value="P:centrosome localization"/>
    <property type="evidence" value="ECO:0000315"/>
    <property type="project" value="FlyBase"/>
</dbReference>
<dbReference type="GO" id="GO:0061883">
    <property type="term" value="P:clathrin-dependent endocytosis involved in vitellogenesis"/>
    <property type="evidence" value="ECO:0000314"/>
    <property type="project" value="FlyBase"/>
</dbReference>
<dbReference type="GO" id="GO:0007080">
    <property type="term" value="P:mitotic metaphase chromosome alignment"/>
    <property type="evidence" value="ECO:0000250"/>
    <property type="project" value="UniProtKB"/>
</dbReference>
<dbReference type="GO" id="GO:0007052">
    <property type="term" value="P:mitotic spindle organization"/>
    <property type="evidence" value="ECO:0000250"/>
    <property type="project" value="UniProtKB"/>
</dbReference>
<dbReference type="GO" id="GO:0051028">
    <property type="term" value="P:mRNA transport"/>
    <property type="evidence" value="ECO:0000314"/>
    <property type="project" value="FlyBase"/>
</dbReference>
<dbReference type="GO" id="GO:0016325">
    <property type="term" value="P:oocyte microtubule cytoskeleton organization"/>
    <property type="evidence" value="ECO:0000315"/>
    <property type="project" value="FlyBase"/>
</dbReference>
<dbReference type="GO" id="GO:0048477">
    <property type="term" value="P:oogenesis"/>
    <property type="evidence" value="ECO:0000314"/>
    <property type="project" value="FlyBase"/>
</dbReference>
<dbReference type="GO" id="GO:0007602">
    <property type="term" value="P:phototransduction"/>
    <property type="evidence" value="ECO:0000315"/>
    <property type="project" value="FlyBase"/>
</dbReference>
<dbReference type="GO" id="GO:0045451">
    <property type="term" value="P:pole plasm oskar mRNA localization"/>
    <property type="evidence" value="ECO:0000314"/>
    <property type="project" value="FlyBase"/>
</dbReference>
<dbReference type="GO" id="GO:2001019">
    <property type="term" value="P:positive regulation of retrograde axon cargo transport"/>
    <property type="evidence" value="ECO:0000315"/>
    <property type="project" value="FlyBase"/>
</dbReference>
<dbReference type="GO" id="GO:0008090">
    <property type="term" value="P:retrograde axonal transport"/>
    <property type="evidence" value="ECO:0000315"/>
    <property type="project" value="FlyBase"/>
</dbReference>
<dbReference type="GO" id="GO:0007051">
    <property type="term" value="P:spindle organization"/>
    <property type="evidence" value="ECO:0000315"/>
    <property type="project" value="FlyBase"/>
</dbReference>
<dbReference type="InterPro" id="IPR028133">
    <property type="entry name" value="Dynamitin"/>
</dbReference>
<dbReference type="PANTHER" id="PTHR15346">
    <property type="entry name" value="DYNACTIN SUBUNIT"/>
    <property type="match status" value="1"/>
</dbReference>
<dbReference type="Pfam" id="PF04912">
    <property type="entry name" value="Dynamitin"/>
    <property type="match status" value="1"/>
</dbReference>
<accession>Q7K2D2</accession>
<feature type="chain" id="PRO_0000288772" description="Dynactin subunit 2">
    <location>
        <begin position="1"/>
        <end position="380"/>
    </location>
</feature>
<feature type="region of interest" description="Disordered" evidence="3">
    <location>
        <begin position="1"/>
        <end position="32"/>
    </location>
</feature>
<feature type="coiled-coil region" evidence="2">
    <location>
        <begin position="100"/>
        <end position="135"/>
    </location>
</feature>
<feature type="coiled-coil region" evidence="2">
    <location>
        <begin position="353"/>
        <end position="377"/>
    </location>
</feature>
<feature type="compositionally biased region" description="Acidic residues" evidence="3">
    <location>
        <begin position="21"/>
        <end position="32"/>
    </location>
</feature>
<feature type="modified residue" description="Phosphoserine" evidence="4">
    <location>
        <position position="49"/>
    </location>
</feature>
<feature type="modified residue" description="Phosphoserine" evidence="4">
    <location>
        <position position="58"/>
    </location>
</feature>
<feature type="modified residue" description="Phosphoserine" evidence="4">
    <location>
        <position position="86"/>
    </location>
</feature>
<name>DCTN2_DROME</name>
<keyword id="KW-0175">Coiled coil</keyword>
<keyword id="KW-0963">Cytoplasm</keyword>
<keyword id="KW-0206">Cytoskeleton</keyword>
<keyword id="KW-0243">Dynein</keyword>
<keyword id="KW-0472">Membrane</keyword>
<keyword id="KW-0493">Microtubule</keyword>
<keyword id="KW-0597">Phosphoprotein</keyword>
<keyword id="KW-1185">Reference proteome</keyword>
<protein>
    <recommendedName>
        <fullName>Dynactin subunit 2</fullName>
        <shortName>Dynamitin</shortName>
    </recommendedName>
    <alternativeName>
        <fullName evidence="6">Dynactin 2 p50 subunit</fullName>
    </alternativeName>
</protein>